<keyword id="KW-0539">Nucleus</keyword>
<keyword id="KW-1185">Reference proteome</keyword>
<feature type="chain" id="PRO_0000323381" description="Protein mago nashi homolog">
    <location>
        <begin position="1"/>
        <end position="197"/>
    </location>
</feature>
<feature type="region of interest" description="Disordered" evidence="2">
    <location>
        <begin position="1"/>
        <end position="43"/>
    </location>
</feature>
<feature type="compositionally biased region" description="Basic and acidic residues" evidence="2">
    <location>
        <begin position="1"/>
        <end position="10"/>
    </location>
</feature>
<feature type="compositionally biased region" description="Low complexity" evidence="2">
    <location>
        <begin position="28"/>
        <end position="42"/>
    </location>
</feature>
<reference key="1">
    <citation type="journal article" date="2005" name="Nature">
        <title>The genome of the social amoeba Dictyostelium discoideum.</title>
        <authorList>
            <person name="Eichinger L."/>
            <person name="Pachebat J.A."/>
            <person name="Gloeckner G."/>
            <person name="Rajandream M.A."/>
            <person name="Sucgang R."/>
            <person name="Berriman M."/>
            <person name="Song J."/>
            <person name="Olsen R."/>
            <person name="Szafranski K."/>
            <person name="Xu Q."/>
            <person name="Tunggal B."/>
            <person name="Kummerfeld S."/>
            <person name="Madera M."/>
            <person name="Konfortov B.A."/>
            <person name="Rivero F."/>
            <person name="Bankier A.T."/>
            <person name="Lehmann R."/>
            <person name="Hamlin N."/>
            <person name="Davies R."/>
            <person name="Gaudet P."/>
            <person name="Fey P."/>
            <person name="Pilcher K."/>
            <person name="Chen G."/>
            <person name="Saunders D."/>
            <person name="Sodergren E.J."/>
            <person name="Davis P."/>
            <person name="Kerhornou A."/>
            <person name="Nie X."/>
            <person name="Hall N."/>
            <person name="Anjard C."/>
            <person name="Hemphill L."/>
            <person name="Bason N."/>
            <person name="Farbrother P."/>
            <person name="Desany B."/>
            <person name="Just E."/>
            <person name="Morio T."/>
            <person name="Rost R."/>
            <person name="Churcher C.M."/>
            <person name="Cooper J."/>
            <person name="Haydock S."/>
            <person name="van Driessche N."/>
            <person name="Cronin A."/>
            <person name="Goodhead I."/>
            <person name="Muzny D.M."/>
            <person name="Mourier T."/>
            <person name="Pain A."/>
            <person name="Lu M."/>
            <person name="Harper D."/>
            <person name="Lindsay R."/>
            <person name="Hauser H."/>
            <person name="James K.D."/>
            <person name="Quiles M."/>
            <person name="Madan Babu M."/>
            <person name="Saito T."/>
            <person name="Buchrieser C."/>
            <person name="Wardroper A."/>
            <person name="Felder M."/>
            <person name="Thangavelu M."/>
            <person name="Johnson D."/>
            <person name="Knights A."/>
            <person name="Loulseged H."/>
            <person name="Mungall K.L."/>
            <person name="Oliver K."/>
            <person name="Price C."/>
            <person name="Quail M.A."/>
            <person name="Urushihara H."/>
            <person name="Hernandez J."/>
            <person name="Rabbinowitsch E."/>
            <person name="Steffen D."/>
            <person name="Sanders M."/>
            <person name="Ma J."/>
            <person name="Kohara Y."/>
            <person name="Sharp S."/>
            <person name="Simmonds M.N."/>
            <person name="Spiegler S."/>
            <person name="Tivey A."/>
            <person name="Sugano S."/>
            <person name="White B."/>
            <person name="Walker D."/>
            <person name="Woodward J.R."/>
            <person name="Winckler T."/>
            <person name="Tanaka Y."/>
            <person name="Shaulsky G."/>
            <person name="Schleicher M."/>
            <person name="Weinstock G.M."/>
            <person name="Rosenthal A."/>
            <person name="Cox E.C."/>
            <person name="Chisholm R.L."/>
            <person name="Gibbs R.A."/>
            <person name="Loomis W.F."/>
            <person name="Platzer M."/>
            <person name="Kay R.R."/>
            <person name="Williams J.G."/>
            <person name="Dear P.H."/>
            <person name="Noegel A.A."/>
            <person name="Barrell B.G."/>
            <person name="Kuspa A."/>
        </authorList>
    </citation>
    <scope>NUCLEOTIDE SEQUENCE [LARGE SCALE GENOMIC DNA]</scope>
    <source>
        <strain>AX4</strain>
    </source>
</reference>
<evidence type="ECO:0000250" key="1"/>
<evidence type="ECO:0000256" key="2">
    <source>
        <dbReference type="SAM" id="MobiDB-lite"/>
    </source>
</evidence>
<evidence type="ECO:0000305" key="3"/>
<dbReference type="EMBL" id="AAFI02000005">
    <property type="protein sequence ID" value="EAL72783.3"/>
    <property type="molecule type" value="Genomic_DNA"/>
</dbReference>
<dbReference type="RefSeq" id="XP_645960.3">
    <property type="nucleotide sequence ID" value="XM_640868.3"/>
</dbReference>
<dbReference type="SMR" id="Q55E21"/>
<dbReference type="FunCoup" id="Q55E21">
    <property type="interactions" value="1167"/>
</dbReference>
<dbReference type="STRING" id="44689.Q55E21"/>
<dbReference type="PaxDb" id="44689-DDB0233620"/>
<dbReference type="EnsemblProtists" id="EAL72783">
    <property type="protein sequence ID" value="EAL72783"/>
    <property type="gene ID" value="DDB_G0270866"/>
</dbReference>
<dbReference type="GeneID" id="8616904"/>
<dbReference type="KEGG" id="ddi:DDB_G0270866"/>
<dbReference type="dictyBase" id="DDB_G0270866">
    <property type="gene designation" value="magoh"/>
</dbReference>
<dbReference type="VEuPathDB" id="AmoebaDB:DDB_G0270866"/>
<dbReference type="eggNOG" id="KOG3392">
    <property type="taxonomic scope" value="Eukaryota"/>
</dbReference>
<dbReference type="HOGENOM" id="CLU_109497_1_1_1"/>
<dbReference type="InParanoid" id="Q55E21"/>
<dbReference type="OMA" id="IRKEMWI"/>
<dbReference type="PhylomeDB" id="Q55E21"/>
<dbReference type="Reactome" id="R-DDI-72163">
    <property type="pathway name" value="mRNA Splicing - Major Pathway"/>
</dbReference>
<dbReference type="Reactome" id="R-DDI-975957">
    <property type="pathway name" value="Nonsense Mediated Decay (NMD) enhanced by the Exon Junction Complex (EJC)"/>
</dbReference>
<dbReference type="PRO" id="PR:Q55E21"/>
<dbReference type="Proteomes" id="UP000002195">
    <property type="component" value="Chromosome 1"/>
</dbReference>
<dbReference type="GO" id="GO:0005737">
    <property type="term" value="C:cytoplasm"/>
    <property type="evidence" value="ECO:0000250"/>
    <property type="project" value="dictyBase"/>
</dbReference>
<dbReference type="GO" id="GO:0035145">
    <property type="term" value="C:exon-exon junction complex"/>
    <property type="evidence" value="ECO:0000318"/>
    <property type="project" value="GO_Central"/>
</dbReference>
<dbReference type="GO" id="GO:0008380">
    <property type="term" value="P:RNA splicing"/>
    <property type="evidence" value="ECO:0000318"/>
    <property type="project" value="GO_Central"/>
</dbReference>
<dbReference type="CDD" id="cd11295">
    <property type="entry name" value="Mago_nashi"/>
    <property type="match status" value="1"/>
</dbReference>
<dbReference type="FunFam" id="3.30.1560.10:FF:000001">
    <property type="entry name" value="Protein mago nashi homolog"/>
    <property type="match status" value="1"/>
</dbReference>
<dbReference type="Gene3D" id="3.30.1560.10">
    <property type="entry name" value="Mago nashi"/>
    <property type="match status" value="1"/>
</dbReference>
<dbReference type="InterPro" id="IPR004023">
    <property type="entry name" value="Mago_nashi"/>
</dbReference>
<dbReference type="InterPro" id="IPR036605">
    <property type="entry name" value="Mago_nashi_sf"/>
</dbReference>
<dbReference type="PANTHER" id="PTHR12638:SF0">
    <property type="entry name" value="MAGO HOMOLOG, EXON JUNCTION COMPLEX SUBUNIT-RELATED"/>
    <property type="match status" value="1"/>
</dbReference>
<dbReference type="PANTHER" id="PTHR12638">
    <property type="entry name" value="PROTEIN MAGO NASHI HOMOLOG"/>
    <property type="match status" value="1"/>
</dbReference>
<dbReference type="Pfam" id="PF02792">
    <property type="entry name" value="Mago_nashi"/>
    <property type="match status" value="1"/>
</dbReference>
<dbReference type="SUPFAM" id="SSF89817">
    <property type="entry name" value="Mago nashi protein"/>
    <property type="match status" value="1"/>
</dbReference>
<protein>
    <recommendedName>
        <fullName>Protein mago nashi homolog</fullName>
    </recommendedName>
</protein>
<sequence>MSDVDTKIELATDSAMDITSPENDNNKTTATATSSSETQTTEDILKTETQKQKDDFYLRYYVGHKGKYGHEFLEFEFRSGNKLRYANNSHYKSENLIRKEVCVSDGVISEIKKVILDSGIMLEDDKNWPEPDVVGKQELEIVFKDEHISFSTTKIGSLMDVEKSDDPEGLKVMFYLIQDLKCLVFSLIGLHFKIKPI</sequence>
<organism>
    <name type="scientific">Dictyostelium discoideum</name>
    <name type="common">Social amoeba</name>
    <dbReference type="NCBI Taxonomy" id="44689"/>
    <lineage>
        <taxon>Eukaryota</taxon>
        <taxon>Amoebozoa</taxon>
        <taxon>Evosea</taxon>
        <taxon>Eumycetozoa</taxon>
        <taxon>Dictyostelia</taxon>
        <taxon>Dictyosteliales</taxon>
        <taxon>Dictyosteliaceae</taxon>
        <taxon>Dictyostelium</taxon>
    </lineage>
</organism>
<accession>Q55E21</accession>
<name>MGN_DICDI</name>
<gene>
    <name type="primary">magoh</name>
    <name type="ORF">DDB_G0270866</name>
</gene>
<proteinExistence type="inferred from homology"/>
<comment type="subcellular location">
    <subcellularLocation>
        <location evidence="1">Nucleus</location>
    </subcellularLocation>
</comment>
<comment type="similarity">
    <text evidence="3">Belongs to the mago nashi family.</text>
</comment>
<comment type="caution">
    <text evidence="3">It is uncertain whether Met-1 or Met-16 is the initiator.</text>
</comment>